<protein>
    <recommendedName>
        <fullName evidence="2">Ornithine carbamoyltransferase</fullName>
        <shortName evidence="2">OTCase</shortName>
        <ecNumber evidence="2">2.1.3.3</ecNumber>
    </recommendedName>
</protein>
<keyword id="KW-0028">Amino-acid biosynthesis</keyword>
<keyword id="KW-0055">Arginine biosynthesis</keyword>
<keyword id="KW-0963">Cytoplasm</keyword>
<keyword id="KW-0808">Transferase</keyword>
<sequence length="305" mass="33227">MGLAGRDLLTLADLSSAEVLEILELAATLKSGQTTVHCPKTLGLIFSKSSTRTRVSFSAAIMQMGGQVLDLNPNVTQVGRGEPIADTARVLSRYLDALAIRTFAQQDLEEYAHYADIPVINALTDDYHPCQILADLQTIQENFGQWQDLTLTYLGDGNNVAHSLLLGCAQVGMNVRIACPPDYQPQERIVAKAQQIAGDRAKVEILHDPIAASQGAHVLYTDVWASMGQEEEAQARVKAFTPYQLNQALLEKADPAAIVLHCLPAHREEEITAEVLEGSQSRVWDQAENRLHAQKAVLALLLGAI</sequence>
<proteinExistence type="inferred from homology"/>
<dbReference type="EC" id="2.1.3.3" evidence="2"/>
<dbReference type="EMBL" id="AP008231">
    <property type="protein sequence ID" value="BAD79782.1"/>
    <property type="molecule type" value="Genomic_DNA"/>
</dbReference>
<dbReference type="RefSeq" id="WP_011243902.1">
    <property type="nucleotide sequence ID" value="NZ_CP085785.1"/>
</dbReference>
<dbReference type="SMR" id="Q5N1N8"/>
<dbReference type="GeneID" id="72431404"/>
<dbReference type="KEGG" id="syc:syc1592_c"/>
<dbReference type="eggNOG" id="COG0078">
    <property type="taxonomic scope" value="Bacteria"/>
</dbReference>
<dbReference type="UniPathway" id="UPA00068">
    <property type="reaction ID" value="UER00112"/>
</dbReference>
<dbReference type="Proteomes" id="UP000001175">
    <property type="component" value="Chromosome"/>
</dbReference>
<dbReference type="GO" id="GO:0005737">
    <property type="term" value="C:cytoplasm"/>
    <property type="evidence" value="ECO:0007669"/>
    <property type="project" value="UniProtKB-SubCell"/>
</dbReference>
<dbReference type="GO" id="GO:0016597">
    <property type="term" value="F:amino acid binding"/>
    <property type="evidence" value="ECO:0007669"/>
    <property type="project" value="InterPro"/>
</dbReference>
<dbReference type="GO" id="GO:0004585">
    <property type="term" value="F:ornithine carbamoyltransferase activity"/>
    <property type="evidence" value="ECO:0007669"/>
    <property type="project" value="UniProtKB-UniRule"/>
</dbReference>
<dbReference type="GO" id="GO:0042450">
    <property type="term" value="P:arginine biosynthetic process via ornithine"/>
    <property type="evidence" value="ECO:0007669"/>
    <property type="project" value="TreeGrafter"/>
</dbReference>
<dbReference type="GO" id="GO:0019240">
    <property type="term" value="P:citrulline biosynthetic process"/>
    <property type="evidence" value="ECO:0007669"/>
    <property type="project" value="TreeGrafter"/>
</dbReference>
<dbReference type="GO" id="GO:0006526">
    <property type="term" value="P:L-arginine biosynthetic process"/>
    <property type="evidence" value="ECO:0007669"/>
    <property type="project" value="UniProtKB-UniRule"/>
</dbReference>
<dbReference type="FunFam" id="3.40.50.1370:FF:000008">
    <property type="entry name" value="Ornithine carbamoyltransferase"/>
    <property type="match status" value="1"/>
</dbReference>
<dbReference type="Gene3D" id="3.40.50.1370">
    <property type="entry name" value="Aspartate/ornithine carbamoyltransferase"/>
    <property type="match status" value="2"/>
</dbReference>
<dbReference type="HAMAP" id="MF_01109">
    <property type="entry name" value="OTCase"/>
    <property type="match status" value="1"/>
</dbReference>
<dbReference type="InterPro" id="IPR006132">
    <property type="entry name" value="Asp/Orn_carbamoyltranf_P-bd"/>
</dbReference>
<dbReference type="InterPro" id="IPR006130">
    <property type="entry name" value="Asp/Orn_carbamoylTrfase"/>
</dbReference>
<dbReference type="InterPro" id="IPR036901">
    <property type="entry name" value="Asp/Orn_carbamoylTrfase_sf"/>
</dbReference>
<dbReference type="InterPro" id="IPR006131">
    <property type="entry name" value="Asp_carbamoyltransf_Asp/Orn-bd"/>
</dbReference>
<dbReference type="InterPro" id="IPR002292">
    <property type="entry name" value="Orn/put_carbamltrans"/>
</dbReference>
<dbReference type="InterPro" id="IPR024904">
    <property type="entry name" value="OTCase_ArgI"/>
</dbReference>
<dbReference type="NCBIfam" id="TIGR00658">
    <property type="entry name" value="orni_carb_tr"/>
    <property type="match status" value="1"/>
</dbReference>
<dbReference type="NCBIfam" id="NF001986">
    <property type="entry name" value="PRK00779.1"/>
    <property type="match status" value="1"/>
</dbReference>
<dbReference type="PANTHER" id="PTHR45753">
    <property type="entry name" value="ORNITHINE CARBAMOYLTRANSFERASE, MITOCHONDRIAL"/>
    <property type="match status" value="1"/>
</dbReference>
<dbReference type="PANTHER" id="PTHR45753:SF3">
    <property type="entry name" value="ORNITHINE TRANSCARBAMYLASE, MITOCHONDRIAL"/>
    <property type="match status" value="1"/>
</dbReference>
<dbReference type="Pfam" id="PF00185">
    <property type="entry name" value="OTCace"/>
    <property type="match status" value="1"/>
</dbReference>
<dbReference type="Pfam" id="PF02729">
    <property type="entry name" value="OTCace_N"/>
    <property type="match status" value="1"/>
</dbReference>
<dbReference type="PRINTS" id="PR00100">
    <property type="entry name" value="AOTCASE"/>
</dbReference>
<dbReference type="PRINTS" id="PR00102">
    <property type="entry name" value="OTCASE"/>
</dbReference>
<dbReference type="SUPFAM" id="SSF53671">
    <property type="entry name" value="Aspartate/ornithine carbamoyltransferase"/>
    <property type="match status" value="1"/>
</dbReference>
<dbReference type="PROSITE" id="PS00097">
    <property type="entry name" value="CARBAMOYLTRANSFERASE"/>
    <property type="match status" value="1"/>
</dbReference>
<accession>Q5N1N8</accession>
<name>OTC_SYNP6</name>
<evidence type="ECO:0000250" key="1"/>
<evidence type="ECO:0000255" key="2">
    <source>
        <dbReference type="HAMAP-Rule" id="MF_01109"/>
    </source>
</evidence>
<feature type="chain" id="PRO_1000065131" description="Ornithine carbamoyltransferase">
    <location>
        <begin position="1"/>
        <end position="305"/>
    </location>
</feature>
<feature type="binding site" evidence="2">
    <location>
        <begin position="50"/>
        <end position="53"/>
    </location>
    <ligand>
        <name>carbamoyl phosphate</name>
        <dbReference type="ChEBI" id="CHEBI:58228"/>
    </ligand>
</feature>
<feature type="binding site" evidence="2">
    <location>
        <position position="77"/>
    </location>
    <ligand>
        <name>carbamoyl phosphate</name>
        <dbReference type="ChEBI" id="CHEBI:58228"/>
    </ligand>
</feature>
<feature type="binding site" evidence="2">
    <location>
        <position position="101"/>
    </location>
    <ligand>
        <name>carbamoyl phosphate</name>
        <dbReference type="ChEBI" id="CHEBI:58228"/>
    </ligand>
</feature>
<feature type="binding site" evidence="2">
    <location>
        <begin position="128"/>
        <end position="131"/>
    </location>
    <ligand>
        <name>carbamoyl phosphate</name>
        <dbReference type="ChEBI" id="CHEBI:58228"/>
    </ligand>
</feature>
<feature type="binding site" evidence="2">
    <location>
        <position position="159"/>
    </location>
    <ligand>
        <name>L-ornithine</name>
        <dbReference type="ChEBI" id="CHEBI:46911"/>
    </ligand>
</feature>
<feature type="binding site" evidence="2">
    <location>
        <position position="222"/>
    </location>
    <ligand>
        <name>L-ornithine</name>
        <dbReference type="ChEBI" id="CHEBI:46911"/>
    </ligand>
</feature>
<feature type="binding site" evidence="2">
    <location>
        <begin position="226"/>
        <end position="227"/>
    </location>
    <ligand>
        <name>L-ornithine</name>
        <dbReference type="ChEBI" id="CHEBI:46911"/>
    </ligand>
</feature>
<feature type="binding site" evidence="2">
    <location>
        <begin position="262"/>
        <end position="263"/>
    </location>
    <ligand>
        <name>carbamoyl phosphate</name>
        <dbReference type="ChEBI" id="CHEBI:58228"/>
    </ligand>
</feature>
<feature type="binding site" evidence="2">
    <location>
        <position position="290"/>
    </location>
    <ligand>
        <name>carbamoyl phosphate</name>
        <dbReference type="ChEBI" id="CHEBI:58228"/>
    </ligand>
</feature>
<organism>
    <name type="scientific">Synechococcus sp. (strain ATCC 27144 / PCC 6301 / SAUG 1402/1)</name>
    <name type="common">Anacystis nidulans</name>
    <dbReference type="NCBI Taxonomy" id="269084"/>
    <lineage>
        <taxon>Bacteria</taxon>
        <taxon>Bacillati</taxon>
        <taxon>Cyanobacteriota</taxon>
        <taxon>Cyanophyceae</taxon>
        <taxon>Synechococcales</taxon>
        <taxon>Synechococcaceae</taxon>
        <taxon>Synechococcus</taxon>
    </lineage>
</organism>
<comment type="function">
    <text evidence="1">Reversibly catalyzes the transfer of the carbamoyl group from carbamoyl phosphate (CP) to the N(epsilon) atom of ornithine (ORN) to produce L-citrulline.</text>
</comment>
<comment type="catalytic activity">
    <reaction evidence="2">
        <text>carbamoyl phosphate + L-ornithine = L-citrulline + phosphate + H(+)</text>
        <dbReference type="Rhea" id="RHEA:19513"/>
        <dbReference type="ChEBI" id="CHEBI:15378"/>
        <dbReference type="ChEBI" id="CHEBI:43474"/>
        <dbReference type="ChEBI" id="CHEBI:46911"/>
        <dbReference type="ChEBI" id="CHEBI:57743"/>
        <dbReference type="ChEBI" id="CHEBI:58228"/>
        <dbReference type="EC" id="2.1.3.3"/>
    </reaction>
</comment>
<comment type="pathway">
    <text evidence="2">Amino-acid biosynthesis; L-arginine biosynthesis; L-arginine from L-ornithine and carbamoyl phosphate: step 1/3.</text>
</comment>
<comment type="subcellular location">
    <subcellularLocation>
        <location evidence="2">Cytoplasm</location>
    </subcellularLocation>
</comment>
<comment type="similarity">
    <text evidence="2">Belongs to the aspartate/ornithine carbamoyltransferase superfamily. OTCase family.</text>
</comment>
<gene>
    <name evidence="2" type="primary">argF</name>
    <name type="ordered locus">syc1592_c</name>
</gene>
<reference key="1">
    <citation type="journal article" date="2007" name="Photosyn. Res.">
        <title>Complete nucleotide sequence of the freshwater unicellular cyanobacterium Synechococcus elongatus PCC 6301 chromosome: gene content and organization.</title>
        <authorList>
            <person name="Sugita C."/>
            <person name="Ogata K."/>
            <person name="Shikata M."/>
            <person name="Jikuya H."/>
            <person name="Takano J."/>
            <person name="Furumichi M."/>
            <person name="Kanehisa M."/>
            <person name="Omata T."/>
            <person name="Sugiura M."/>
            <person name="Sugita M."/>
        </authorList>
    </citation>
    <scope>NUCLEOTIDE SEQUENCE [LARGE SCALE GENOMIC DNA]</scope>
    <source>
        <strain>ATCC 27144 / PCC 6301 / SAUG 1402/1</strain>
    </source>
</reference>